<proteinExistence type="inferred from homology"/>
<protein>
    <recommendedName>
        <fullName evidence="1">Ribonuclease Y</fullName>
        <shortName evidence="1">RNase Y</shortName>
        <ecNumber evidence="1">3.1.-.-</ecNumber>
    </recommendedName>
    <alternativeName>
        <fullName>Conserved virulence factor A</fullName>
    </alternativeName>
</protein>
<gene>
    <name evidence="1" type="primary">rny</name>
    <name type="synonym">cvfA</name>
    <name type="ordered locus">SAHV_1276</name>
</gene>
<dbReference type="EC" id="3.1.-.-" evidence="1"/>
<dbReference type="EMBL" id="AP009324">
    <property type="protein sequence ID" value="BAF78159.1"/>
    <property type="molecule type" value="Genomic_DNA"/>
</dbReference>
<dbReference type="RefSeq" id="WP_001050913.1">
    <property type="nucleotide sequence ID" value="NC_009782.1"/>
</dbReference>
<dbReference type="SMR" id="A7X1S5"/>
<dbReference type="KEGG" id="saw:SAHV_1276"/>
<dbReference type="HOGENOM" id="CLU_028328_1_0_9"/>
<dbReference type="GO" id="GO:0005886">
    <property type="term" value="C:plasma membrane"/>
    <property type="evidence" value="ECO:0007669"/>
    <property type="project" value="UniProtKB-SubCell"/>
</dbReference>
<dbReference type="GO" id="GO:0003723">
    <property type="term" value="F:RNA binding"/>
    <property type="evidence" value="ECO:0007669"/>
    <property type="project" value="UniProtKB-UniRule"/>
</dbReference>
<dbReference type="GO" id="GO:0004521">
    <property type="term" value="F:RNA endonuclease activity"/>
    <property type="evidence" value="ECO:0007669"/>
    <property type="project" value="UniProtKB-UniRule"/>
</dbReference>
<dbReference type="GO" id="GO:0006402">
    <property type="term" value="P:mRNA catabolic process"/>
    <property type="evidence" value="ECO:0007669"/>
    <property type="project" value="UniProtKB-UniRule"/>
</dbReference>
<dbReference type="CDD" id="cd00077">
    <property type="entry name" value="HDc"/>
    <property type="match status" value="1"/>
</dbReference>
<dbReference type="CDD" id="cd22431">
    <property type="entry name" value="KH-I_RNaseY"/>
    <property type="match status" value="1"/>
</dbReference>
<dbReference type="FunFam" id="1.10.3210.10:FF:000003">
    <property type="entry name" value="Ribonuclease Y"/>
    <property type="match status" value="1"/>
</dbReference>
<dbReference type="FunFam" id="3.30.1370.10:FF:000006">
    <property type="entry name" value="Ribonuclease Y"/>
    <property type="match status" value="1"/>
</dbReference>
<dbReference type="Gene3D" id="1.10.3210.10">
    <property type="entry name" value="Hypothetical protein af1432"/>
    <property type="match status" value="1"/>
</dbReference>
<dbReference type="Gene3D" id="3.30.1370.10">
    <property type="entry name" value="K Homology domain, type 1"/>
    <property type="match status" value="1"/>
</dbReference>
<dbReference type="HAMAP" id="MF_00335">
    <property type="entry name" value="RNase_Y"/>
    <property type="match status" value="1"/>
</dbReference>
<dbReference type="InterPro" id="IPR003607">
    <property type="entry name" value="HD/PDEase_dom"/>
</dbReference>
<dbReference type="InterPro" id="IPR006674">
    <property type="entry name" value="HD_domain"/>
</dbReference>
<dbReference type="InterPro" id="IPR006675">
    <property type="entry name" value="HDIG_dom"/>
</dbReference>
<dbReference type="InterPro" id="IPR004087">
    <property type="entry name" value="KH_dom"/>
</dbReference>
<dbReference type="InterPro" id="IPR004088">
    <property type="entry name" value="KH_dom_type_1"/>
</dbReference>
<dbReference type="InterPro" id="IPR036612">
    <property type="entry name" value="KH_dom_type_1_sf"/>
</dbReference>
<dbReference type="InterPro" id="IPR017705">
    <property type="entry name" value="Ribonuclease_Y"/>
</dbReference>
<dbReference type="InterPro" id="IPR022711">
    <property type="entry name" value="RNase_Y_N"/>
</dbReference>
<dbReference type="NCBIfam" id="TIGR00277">
    <property type="entry name" value="HDIG"/>
    <property type="match status" value="1"/>
</dbReference>
<dbReference type="NCBIfam" id="TIGR03319">
    <property type="entry name" value="RNase_Y"/>
    <property type="match status" value="1"/>
</dbReference>
<dbReference type="PANTHER" id="PTHR12826">
    <property type="entry name" value="RIBONUCLEASE Y"/>
    <property type="match status" value="1"/>
</dbReference>
<dbReference type="PANTHER" id="PTHR12826:SF15">
    <property type="entry name" value="RIBONUCLEASE Y"/>
    <property type="match status" value="1"/>
</dbReference>
<dbReference type="Pfam" id="PF01966">
    <property type="entry name" value="HD"/>
    <property type="match status" value="1"/>
</dbReference>
<dbReference type="Pfam" id="PF00013">
    <property type="entry name" value="KH_1"/>
    <property type="match status" value="1"/>
</dbReference>
<dbReference type="Pfam" id="PF12072">
    <property type="entry name" value="RNase_Y_N"/>
    <property type="match status" value="1"/>
</dbReference>
<dbReference type="SMART" id="SM00471">
    <property type="entry name" value="HDc"/>
    <property type="match status" value="1"/>
</dbReference>
<dbReference type="SMART" id="SM00322">
    <property type="entry name" value="KH"/>
    <property type="match status" value="1"/>
</dbReference>
<dbReference type="SUPFAM" id="SSF54791">
    <property type="entry name" value="Eukaryotic type KH-domain (KH-domain type I)"/>
    <property type="match status" value="1"/>
</dbReference>
<dbReference type="SUPFAM" id="SSF109604">
    <property type="entry name" value="HD-domain/PDEase-like"/>
    <property type="match status" value="1"/>
</dbReference>
<dbReference type="PROSITE" id="PS51831">
    <property type="entry name" value="HD"/>
    <property type="match status" value="1"/>
</dbReference>
<dbReference type="PROSITE" id="PS50084">
    <property type="entry name" value="KH_TYPE_1"/>
    <property type="match status" value="1"/>
</dbReference>
<comment type="function">
    <text evidence="1">Endoribonuclease that initiates mRNA decay.</text>
</comment>
<comment type="subcellular location">
    <subcellularLocation>
        <location evidence="1">Cell membrane</location>
        <topology evidence="1">Single-pass membrane protein</topology>
    </subcellularLocation>
</comment>
<comment type="similarity">
    <text evidence="1">Belongs to the RNase Y family.</text>
</comment>
<accession>A7X1S5</accession>
<name>RNY_STAA1</name>
<feature type="chain" id="PRO_0000344934" description="Ribonuclease Y">
    <location>
        <begin position="1"/>
        <end position="519"/>
    </location>
</feature>
<feature type="transmembrane region" description="Helical" evidence="1">
    <location>
        <begin position="3"/>
        <end position="23"/>
    </location>
</feature>
<feature type="domain" description="KH" evidence="1">
    <location>
        <begin position="209"/>
        <end position="269"/>
    </location>
</feature>
<feature type="domain" description="HD" evidence="2">
    <location>
        <begin position="335"/>
        <end position="428"/>
    </location>
</feature>
<evidence type="ECO:0000255" key="1">
    <source>
        <dbReference type="HAMAP-Rule" id="MF_00335"/>
    </source>
</evidence>
<evidence type="ECO:0000255" key="2">
    <source>
        <dbReference type="PROSITE-ProRule" id="PRU01175"/>
    </source>
</evidence>
<organism>
    <name type="scientific">Staphylococcus aureus (strain Mu3 / ATCC 700698)</name>
    <dbReference type="NCBI Taxonomy" id="418127"/>
    <lineage>
        <taxon>Bacteria</taxon>
        <taxon>Bacillati</taxon>
        <taxon>Bacillota</taxon>
        <taxon>Bacilli</taxon>
        <taxon>Bacillales</taxon>
        <taxon>Staphylococcaceae</taxon>
        <taxon>Staphylococcus</taxon>
    </lineage>
</organism>
<reference key="1">
    <citation type="journal article" date="2008" name="Antimicrob. Agents Chemother.">
        <title>Mutated response regulator graR is responsible for phenotypic conversion of Staphylococcus aureus from heterogeneous vancomycin-intermediate resistance to vancomycin-intermediate resistance.</title>
        <authorList>
            <person name="Neoh H.-M."/>
            <person name="Cui L."/>
            <person name="Yuzawa H."/>
            <person name="Takeuchi F."/>
            <person name="Matsuo M."/>
            <person name="Hiramatsu K."/>
        </authorList>
    </citation>
    <scope>NUCLEOTIDE SEQUENCE [LARGE SCALE GENOMIC DNA]</scope>
    <source>
        <strain>Mu3 / ATCC 700698</strain>
    </source>
</reference>
<sequence>MNLLSLLLILLGIILGVVGGYVVARNLLLQKQSQARQTAEDIVNQAHKEADNIKKEKLLEAKEENQILREQTEAELRERRSELQRQETRLLQKEENLERKSDLLDKKDEILEQKESKIEEKQQQVDAKESSVQTLIMKHEQELERISGLTQEEAINEQLQRVEEELSQDIAVLVKEKEKEAKEKVDKTAKELLATAVQRLAADHTSESTVSVVNLPNDEMKGRIIGREGRNIRTLETLTGIDLIIDDTPEAVILSGFDPIRREIARTALVNLVSDGRIHPGRIEDMVEKARKEVDDIIREAGEQATFEVNAHNMHPDLVKIVGRLNYRTSYGQNVLKHSIEVAHLASMLAAELGEDETLAKRAGLLHDVGKAIDHEVEGSHVEIGVELAKKYGENETVINAIHSHHGDVEPTSIISILVAAADALSAARPGARKETLENYIRRLERLETLSESYDGVEKAFAIQAGREIRVIVSPEEIDDLKSYRLARDIKNQIEDELQYPGHIKVTVVRETRAVEYAK</sequence>
<keyword id="KW-1003">Cell membrane</keyword>
<keyword id="KW-0255">Endonuclease</keyword>
<keyword id="KW-0378">Hydrolase</keyword>
<keyword id="KW-0472">Membrane</keyword>
<keyword id="KW-0540">Nuclease</keyword>
<keyword id="KW-0694">RNA-binding</keyword>
<keyword id="KW-0812">Transmembrane</keyword>
<keyword id="KW-1133">Transmembrane helix</keyword>
<keyword id="KW-0843">Virulence</keyword>